<reference key="1">
    <citation type="submission" date="2007-05" db="EMBL/GenBank/DDBJ databases">
        <title>Complete sequence of chromosome of Acidiphilium cryptum JF-5.</title>
        <authorList>
            <consortium name="US DOE Joint Genome Institute"/>
            <person name="Copeland A."/>
            <person name="Lucas S."/>
            <person name="Lapidus A."/>
            <person name="Barry K."/>
            <person name="Detter J.C."/>
            <person name="Glavina del Rio T."/>
            <person name="Hammon N."/>
            <person name="Israni S."/>
            <person name="Dalin E."/>
            <person name="Tice H."/>
            <person name="Pitluck S."/>
            <person name="Sims D."/>
            <person name="Brettin T."/>
            <person name="Bruce D."/>
            <person name="Han C."/>
            <person name="Schmutz J."/>
            <person name="Larimer F."/>
            <person name="Land M."/>
            <person name="Hauser L."/>
            <person name="Kyrpides N."/>
            <person name="Kim E."/>
            <person name="Magnuson T."/>
            <person name="Richardson P."/>
        </authorList>
    </citation>
    <scope>NUCLEOTIDE SEQUENCE [LARGE SCALE GENOMIC DNA]</scope>
    <source>
        <strain>JF-5</strain>
    </source>
</reference>
<keyword id="KW-1185">Reference proteome</keyword>
<keyword id="KW-0687">Ribonucleoprotein</keyword>
<keyword id="KW-0689">Ribosomal protein</keyword>
<keyword id="KW-0694">RNA-binding</keyword>
<keyword id="KW-0699">rRNA-binding</keyword>
<feature type="chain" id="PRO_0000354440" description="Large ribosomal subunit protein uL22">
    <location>
        <begin position="1"/>
        <end position="153"/>
    </location>
</feature>
<feature type="region of interest" description="Disordered" evidence="2">
    <location>
        <begin position="128"/>
        <end position="153"/>
    </location>
</feature>
<feature type="compositionally biased region" description="Low complexity" evidence="2">
    <location>
        <begin position="137"/>
        <end position="147"/>
    </location>
</feature>
<comment type="function">
    <text evidence="1">This protein binds specifically to 23S rRNA; its binding is stimulated by other ribosomal proteins, e.g. L4, L17, and L20. It is important during the early stages of 50S assembly. It makes multiple contacts with different domains of the 23S rRNA in the assembled 50S subunit and ribosome (By similarity).</text>
</comment>
<comment type="function">
    <text evidence="1">The globular domain of the protein is located near the polypeptide exit tunnel on the outside of the subunit, while an extended beta-hairpin is found that lines the wall of the exit tunnel in the center of the 70S ribosome.</text>
</comment>
<comment type="subunit">
    <text evidence="1">Part of the 50S ribosomal subunit.</text>
</comment>
<comment type="similarity">
    <text evidence="1">Belongs to the universal ribosomal protein uL22 family.</text>
</comment>
<gene>
    <name evidence="1" type="primary">rplV</name>
    <name type="ordered locus">Acry_1941</name>
</gene>
<proteinExistence type="inferred from homology"/>
<name>RL22_ACICJ</name>
<dbReference type="EMBL" id="CP000697">
    <property type="protein sequence ID" value="ABQ31142.1"/>
    <property type="molecule type" value="Genomic_DNA"/>
</dbReference>
<dbReference type="RefSeq" id="WP_007424178.1">
    <property type="nucleotide sequence ID" value="NC_009484.1"/>
</dbReference>
<dbReference type="SMR" id="A5FZW0"/>
<dbReference type="STRING" id="349163.Acry_1941"/>
<dbReference type="KEGG" id="acr:Acry_1941"/>
<dbReference type="eggNOG" id="COG0091">
    <property type="taxonomic scope" value="Bacteria"/>
</dbReference>
<dbReference type="HOGENOM" id="CLU_083987_3_0_5"/>
<dbReference type="Proteomes" id="UP000000245">
    <property type="component" value="Chromosome"/>
</dbReference>
<dbReference type="GO" id="GO:0022625">
    <property type="term" value="C:cytosolic large ribosomal subunit"/>
    <property type="evidence" value="ECO:0007669"/>
    <property type="project" value="TreeGrafter"/>
</dbReference>
<dbReference type="GO" id="GO:0019843">
    <property type="term" value="F:rRNA binding"/>
    <property type="evidence" value="ECO:0007669"/>
    <property type="project" value="UniProtKB-UniRule"/>
</dbReference>
<dbReference type="GO" id="GO:0003735">
    <property type="term" value="F:structural constituent of ribosome"/>
    <property type="evidence" value="ECO:0007669"/>
    <property type="project" value="InterPro"/>
</dbReference>
<dbReference type="GO" id="GO:0006412">
    <property type="term" value="P:translation"/>
    <property type="evidence" value="ECO:0007669"/>
    <property type="project" value="UniProtKB-UniRule"/>
</dbReference>
<dbReference type="CDD" id="cd00336">
    <property type="entry name" value="Ribosomal_L22"/>
    <property type="match status" value="1"/>
</dbReference>
<dbReference type="Gene3D" id="3.90.470.10">
    <property type="entry name" value="Ribosomal protein L22/L17"/>
    <property type="match status" value="1"/>
</dbReference>
<dbReference type="HAMAP" id="MF_01331_B">
    <property type="entry name" value="Ribosomal_uL22_B"/>
    <property type="match status" value="1"/>
</dbReference>
<dbReference type="InterPro" id="IPR001063">
    <property type="entry name" value="Ribosomal_uL22"/>
</dbReference>
<dbReference type="InterPro" id="IPR005727">
    <property type="entry name" value="Ribosomal_uL22_bac/chlpt-type"/>
</dbReference>
<dbReference type="InterPro" id="IPR047867">
    <property type="entry name" value="Ribosomal_uL22_bac/org-type"/>
</dbReference>
<dbReference type="InterPro" id="IPR018260">
    <property type="entry name" value="Ribosomal_uL22_CS"/>
</dbReference>
<dbReference type="InterPro" id="IPR036394">
    <property type="entry name" value="Ribosomal_uL22_sf"/>
</dbReference>
<dbReference type="NCBIfam" id="TIGR01044">
    <property type="entry name" value="rplV_bact"/>
    <property type="match status" value="1"/>
</dbReference>
<dbReference type="PANTHER" id="PTHR13501">
    <property type="entry name" value="CHLOROPLAST 50S RIBOSOMAL PROTEIN L22-RELATED"/>
    <property type="match status" value="1"/>
</dbReference>
<dbReference type="PANTHER" id="PTHR13501:SF8">
    <property type="entry name" value="LARGE RIBOSOMAL SUBUNIT PROTEIN UL22M"/>
    <property type="match status" value="1"/>
</dbReference>
<dbReference type="Pfam" id="PF00237">
    <property type="entry name" value="Ribosomal_L22"/>
    <property type="match status" value="1"/>
</dbReference>
<dbReference type="SUPFAM" id="SSF54843">
    <property type="entry name" value="Ribosomal protein L22"/>
    <property type="match status" value="1"/>
</dbReference>
<dbReference type="PROSITE" id="PS00464">
    <property type="entry name" value="RIBOSOMAL_L22"/>
    <property type="match status" value="1"/>
</dbReference>
<evidence type="ECO:0000255" key="1">
    <source>
        <dbReference type="HAMAP-Rule" id="MF_01331"/>
    </source>
</evidence>
<evidence type="ECO:0000256" key="2">
    <source>
        <dbReference type="SAM" id="MobiDB-lite"/>
    </source>
</evidence>
<evidence type="ECO:0000305" key="3"/>
<protein>
    <recommendedName>
        <fullName evidence="1">Large ribosomal subunit protein uL22</fullName>
    </recommendedName>
    <alternativeName>
        <fullName evidence="3">50S ribosomal protein L22</fullName>
    </alternativeName>
</protein>
<organism>
    <name type="scientific">Acidiphilium cryptum (strain JF-5)</name>
    <dbReference type="NCBI Taxonomy" id="349163"/>
    <lineage>
        <taxon>Bacteria</taxon>
        <taxon>Pseudomonadati</taxon>
        <taxon>Pseudomonadota</taxon>
        <taxon>Alphaproteobacteria</taxon>
        <taxon>Acetobacterales</taxon>
        <taxon>Acidocellaceae</taxon>
        <taxon>Acidiphilium</taxon>
    </lineage>
</organism>
<sequence length="153" mass="16732">MSKPNHPRTLADSEAEAVLRNLRCSPRKLNVVAASIRNKPAGKAVADLTFSKRRIAKDVKKALESAIANAENNHQLDVDRLVVTTADVGRSIVMRRFHARGRGRAARVEKWFSHLRIVVAERDIETKADRRARRAAAKPAASASPAANEGVPA</sequence>
<accession>A5FZW0</accession>